<organism>
    <name type="scientific">Zaire ebolavirus (strain Mayinga-76)</name>
    <name type="common">ZEBOV</name>
    <name type="synonym">Zaire Ebola virus</name>
    <dbReference type="NCBI Taxonomy" id="128952"/>
    <lineage>
        <taxon>Viruses</taxon>
        <taxon>Riboviria</taxon>
        <taxon>Orthornavirae</taxon>
        <taxon>Negarnaviricota</taxon>
        <taxon>Haploviricotina</taxon>
        <taxon>Monjiviricetes</taxon>
        <taxon>Mononegavirales</taxon>
        <taxon>Filoviridae</taxon>
        <taxon>Orthoebolavirus</taxon>
        <taxon>Orthoebolavirus zairense</taxon>
        <taxon>Zaire ebolavirus</taxon>
    </lineage>
</organism>
<evidence type="ECO:0000250" key="1">
    <source>
        <dbReference type="UniProtKB" id="Q77DJ5"/>
    </source>
</evidence>
<evidence type="ECO:0000256" key="2">
    <source>
        <dbReference type="SAM" id="MobiDB-lite"/>
    </source>
</evidence>
<evidence type="ECO:0000269" key="3">
    <source>
    </source>
</evidence>
<evidence type="ECO:0000269" key="4">
    <source>
    </source>
</evidence>
<evidence type="ECO:0000269" key="5">
    <source>
    </source>
</evidence>
<evidence type="ECO:0000269" key="6">
    <source>
    </source>
</evidence>
<evidence type="ECO:0000269" key="7">
    <source>
    </source>
</evidence>
<evidence type="ECO:0000269" key="8">
    <source>
    </source>
</evidence>
<evidence type="ECO:0000269" key="9">
    <source>
    </source>
</evidence>
<evidence type="ECO:0000269" key="10">
    <source>
    </source>
</evidence>
<evidence type="ECO:0000269" key="11">
    <source>
    </source>
</evidence>
<evidence type="ECO:0000269" key="12">
    <source>
    </source>
</evidence>
<evidence type="ECO:0000269" key="13">
    <source>
    </source>
</evidence>
<evidence type="ECO:0000303" key="14">
    <source>
    </source>
</evidence>
<evidence type="ECO:0000303" key="15">
    <source>
    </source>
</evidence>
<evidence type="ECO:0000305" key="16"/>
<evidence type="ECO:0000305" key="17">
    <source>
    </source>
</evidence>
<evidence type="ECO:0007829" key="18">
    <source>
        <dbReference type="PDB" id="5DVW"/>
    </source>
</evidence>
<evidence type="ECO:0007829" key="19">
    <source>
        <dbReference type="PDB" id="5T3T"/>
    </source>
</evidence>
<reference key="1">
    <citation type="journal article" date="1993" name="Virus Res.">
        <title>Sequence analysis of the Ebola virus genome: organization, genetic elements, and comparison with the genome of Marburg virus.</title>
        <authorList>
            <person name="Sanchez A."/>
            <person name="Kiley M.P."/>
            <person name="Holloway B.P."/>
            <person name="Auperin D.D."/>
        </authorList>
    </citation>
    <scope>NUCLEOTIDE SEQUENCE [GENOMIC RNA]</scope>
</reference>
<reference key="2">
    <citation type="submission" date="2002-04" db="EMBL/GenBank/DDBJ databases">
        <authorList>
            <person name="Wilson J.A."/>
            <person name="Kondig J.P."/>
            <person name="Kuehne A.I."/>
            <person name="Hart M.K."/>
        </authorList>
    </citation>
    <scope>NUCLEOTIDE SEQUENCE [GENOMIC RNA]</scope>
</reference>
<reference key="3">
    <citation type="journal article" date="2000" name="Virology">
        <title>Molecular characterization of guinea pig-adapted variants of Ebola virus.</title>
        <authorList>
            <person name="Volchkov V.E."/>
            <person name="Chepurnov A.A."/>
            <person name="Volchkova V.A."/>
            <person name="Ternovoj V.A."/>
            <person name="Klenk H.D."/>
        </authorList>
    </citation>
    <scope>NUCLEOTIDE SEQUENCE [GENOMIC RNA]</scope>
    <source>
        <strain>Isolate guinea pig-adapted</strain>
    </source>
</reference>
<reference key="4">
    <citation type="submission" date="2003-07" db="EMBL/GenBank/DDBJ databases">
        <authorList>
            <person name="Ichou M.A."/>
            <person name="Paragas J."/>
            <person name="Jahrling P.B."/>
            <person name="Ibrahim M.S."/>
            <person name="Lofts L."/>
            <person name="Hevey M."/>
            <person name="Schmaljohn A."/>
        </authorList>
    </citation>
    <scope>NUCLEOTIDE SEQUENCE [GENOMIC RNA]</scope>
</reference>
<reference key="5">
    <citation type="journal article" date="2002" name="J. Biol. Chem.">
        <title>Phosphorylation of VP30 impairs ebola virus transcription.</title>
        <authorList>
            <person name="Modrof J."/>
            <person name="Muhlberger E."/>
            <person name="Klenk H.D."/>
            <person name="Becker S."/>
        </authorList>
    </citation>
    <scope>PHOSPHORYLATION</scope>
</reference>
<reference key="6">
    <citation type="journal article" date="2002" name="J. Virol.">
        <title>Ebola virus VP30-mediated transcription is regulated by RNA secondary structure formation.</title>
        <authorList>
            <person name="Weik M."/>
            <person name="Modrof J."/>
            <person name="Klenk H.D."/>
            <person name="Becker S."/>
            <person name="Muhlberger E."/>
        </authorList>
    </citation>
    <scope>FUNCTION</scope>
</reference>
<reference key="7">
    <citation type="journal article" date="2002" name="Mol. Cell">
        <title>The assembly of Ebola virus nucleocapsid requires virion-associated proteins 35 and 24 and posttranslational modification of nucleoprotein.</title>
        <authorList>
            <person name="Huang Y."/>
            <person name="Xu L."/>
            <person name="Sun Y."/>
            <person name="Nabel G.J."/>
        </authorList>
    </citation>
    <scope>INTERACTION WITH THE NUCLEOPROTEIN</scope>
</reference>
<reference key="8">
    <citation type="journal article" date="2003" name="J. Virol.">
        <title>Ebola virus transcription activator VP30 is a zinc-binding protein.</title>
        <authorList>
            <person name="Modrof J."/>
            <person name="Becker S."/>
            <person name="Muhlberger E."/>
        </authorList>
    </citation>
    <scope>ZINC-FINGER</scope>
</reference>
<reference key="9">
    <citation type="journal article" date="2003" name="J. Biol. Chem.">
        <title>Oligomerization of Ebola virus VP30 is essential for viral transcription and can be inhibited by a synthetic peptide.</title>
        <authorList>
            <person name="Hartlieb B."/>
            <person name="Modrof J."/>
            <person name="Muhlberger E."/>
            <person name="Klenk H.D."/>
            <person name="Becker S."/>
        </authorList>
    </citation>
    <scope>MUTAGENESIS OF LEU-100 AND LEU-102</scope>
</reference>
<reference key="10">
    <citation type="journal article" date="2007" name="J. Virol.">
        <title>Ebola virus VP30 is an RNA binding protein.</title>
        <authorList>
            <person name="John S.P."/>
            <person name="Wang T."/>
            <person name="Steffen S."/>
            <person name="Longhi S."/>
            <person name="Schmaljohn C.S."/>
            <person name="Jonsson C.B."/>
        </authorList>
    </citation>
    <scope>RNA-BINDING</scope>
    <scope>INTRINSICALLY DISORDERED REGION</scope>
</reference>
<reference key="11">
    <citation type="journal article" date="2008" name="J. Virol.">
        <title>Role of Ebola virus VP30 in transcription reinitiation.</title>
        <authorList>
            <person name="Martinez M.J."/>
            <person name="Biedenkopf N."/>
            <person name="Volchkova V."/>
            <person name="Hartlieb B."/>
            <person name="Alazard-Dany N."/>
            <person name="Reynard O."/>
            <person name="Becker S."/>
            <person name="Volchkov V."/>
        </authorList>
    </citation>
    <scope>FUNCTION</scope>
</reference>
<reference key="12">
    <citation type="journal article" date="2016" name="J. Virol.">
        <title>RNA Binding of Ebola Virus VP30 Is Essential for Activating Viral Transcription.</title>
        <authorList>
            <person name="Biedenkopf N."/>
            <person name="Schlereth J."/>
            <person name="Gruenweller A."/>
            <person name="Becker S."/>
            <person name="Hartmann R.K."/>
        </authorList>
    </citation>
    <scope>FUNCTION</scope>
    <scope>SUBUNIT</scope>
    <scope>RNA BINDING</scope>
    <scope>MUTAGENESIS OF CYS-72</scope>
</reference>
<reference key="13">
    <citation type="journal article" date="2016" name="RNA Biol.">
        <title>RNA binding specificity of Ebola virus transcription factor VP30.</title>
        <authorList>
            <person name="Schlereth J."/>
            <person name="Gruenweller A."/>
            <person name="Biedenkopf N."/>
            <person name="Becker S."/>
            <person name="Hartmann R.K."/>
        </authorList>
    </citation>
    <scope>FUNCTION</scope>
    <scope>RNA-BINDING</scope>
</reference>
<reference key="14">
    <citation type="journal article" date="2017" name="Virology">
        <title>Dynamic phosphorylation of Ebola virus VP30 in NP-induced inclusion bodies.</title>
        <authorList>
            <person name="Lier C."/>
            <person name="Becker S."/>
            <person name="Biedenkopf N."/>
        </authorList>
    </citation>
    <scope>PHOSPHORYLATION AT SER-29</scope>
    <scope>SUBCELLULAR LOCATION</scope>
</reference>
<reference key="15">
    <citation type="journal article" date="2017" name="Nat. Commun.">
        <title>Ebola virus VP30 and nucleoprotein interactions modulate viral RNA synthesis.</title>
        <authorList>
            <person name="Xu W."/>
            <person name="Luthra P."/>
            <person name="Wu C."/>
            <person name="Batra J."/>
            <person name="Leung D.W."/>
            <person name="Basler C.F."/>
            <person name="Amarasinghe G.K."/>
        </authorList>
    </citation>
    <scope>FUNCTION</scope>
    <scope>INTERACTION WITH NP</scope>
    <scope>NOMENCLATURE</scope>
    <source>
        <strain>isolate IRF0164</strain>
    </source>
</reference>
<reference key="16">
    <citation type="journal article" date="2018" name="Mol. Cell">
        <title>The Ebola virus nucleoprotein recruits the host PP2A-B56 Phosphatase to activate transcriptional support activity of VP30.</title>
        <authorList>
            <person name="Kruse T."/>
            <person name="Biedenkopf N."/>
            <person name="Hertz E.P.T."/>
            <person name="Dietzel E."/>
            <person name="Stalmann G."/>
            <person name="Lopez-Mendez B."/>
            <person name="Davey N.E."/>
            <person name="Nilsson J."/>
            <person name="Becker S."/>
        </authorList>
    </citation>
    <scope>DEPHOSPHORYLATION BY HOST PPP2R5C</scope>
</reference>
<reference key="17">
    <citation type="journal article" date="2018" name="MBio">
        <title>Staufen1 Interacts with Multiple Components of the Ebola Virus Ribonucleoprotein and Enhances Viral RNA Synthesis.</title>
        <authorList>
            <person name="Fang J."/>
            <person name="Pietzsch C."/>
            <person name="Ramanathan P."/>
            <person name="Santos R.I."/>
            <person name="Ilinykh P.A."/>
            <person name="Garcia-Blanco M.A."/>
            <person name="Bukreyev A."/>
            <person name="Bradrick S.S."/>
        </authorList>
    </citation>
    <scope>INTERACTION WITH HOST STAU1</scope>
</reference>
<reference key="18">
    <citation type="journal article" date="2016" name="PLoS Pathog.">
        <title>The Ebola virus VP30-NP interaction is a regulator of viral RNA synthesis.</title>
        <authorList>
            <person name="Kirchdoerfer R.N."/>
            <person name="Moyer C.L."/>
            <person name="Abelson D.M."/>
            <person name="Saphire E.O."/>
        </authorList>
    </citation>
    <scope>X-RAY CRYSTALLOGRAPHY (2.20 ANGSTROMS) OF 139-288</scope>
    <scope>INTERACTION WITH NP AND VP35</scope>
    <scope>SUBCELLULAR LOCATION</scope>
    <scope>MUTAGENESIS OF GLU-197; ASP-202; GLN-203; GLN-229; TRP-230 AND SER-234</scope>
</reference>
<protein>
    <recommendedName>
        <fullName evidence="15">Transcriptional activator VP30</fullName>
    </recommendedName>
    <alternativeName>
        <fullName evidence="14">Ebola VP30</fullName>
        <shortName evidence="14">eVP30</shortName>
    </alternativeName>
    <alternativeName>
        <fullName>Minor nucleoprotein VP30</fullName>
    </alternativeName>
</protein>
<sequence>MEASYERGRPRAARQHSRDGHDHHVRARSSSRENYRGEYRQSRSASQVRVPTVFHKKRVEPLTVPPAPKDICPTLKKGFLCDSSFCKKDHQLESLTDRELLLLIARKTCGSVEQQLNITAPKDSRLANPTADDFQQEEGPKITLLTLIKTAEHWARQDIRTIEDSKLRALLTLCAVMTRKFSKSQLSLLCETHLRREGLGQDQAEPVLEVYQRLHSDKGGSFEAALWQQWDRQSLIMFITAFLNIALQLPCESSAVVVSGLRTLVPQSDNEEASTNPGTCSWSDEGTP</sequence>
<comment type="function">
    <text evidence="1 4 7 8 9 11">Multifunctional protein that acts as a viral transcriptional activator (PubMed:12163572, PubMed:27279615). Promotes read-through of an RNA hairpin in the NP open reading frame to enhance viral transcription (PubMed:12163572). Mechanistically, nonphosphorylated VP30 hexamers form a ternary complex with the viral leader RNA (PubMed:27315567). Clamps the RNA template and the complex VP35-polymerase L together, thereby increasing the polymerase affinity for the RNA template to increase transcription initiation despite the presence of RNA secondary structures. Also assists stop-start transcription at gene junctions to promote transcription of downstream genes (PubMed:18829754). Interaction with NP plays a critical role in transcription initiation by recognizing the RNA stem loop (PubMed:28593988). Interaction with host RBBP6 interferes with NP-VP30 interaction and inhibits viral RNA synthesis. Also acts as a suppressor of RNA silencing by interacting with host DICER1 and TARBP2/TRBP (By similarity).</text>
</comment>
<comment type="subunit">
    <text evidence="1 5 8 10 11 13">Homohexamer; hexamerization is essential for RNA binding (PubMed:27279615). Interacts with the nucleoprotein/NP; this interaction plays both essential and inhibitory roles in viral RNA synthesis (PubMed:28593988). Interacts with VP35 (PubMed:12191476, PubMed:27755595). Interacts with host STAU1 (PubMed:30301857). Interacts (via C-terminus) with host RBBP6 isoform 1 (By similarity). Interacts with host DICER1; this interaction prevents TARBP2/TRBP binding to DICER1 and thus allows the virus to counteract host RNA silencing (By similarity). Interacts with host TARBP2/TRBP; this interaction, which occurs only in the presence of siRNA, prevents TARBP2 binding to DICER1 and thus allows the virus to counteract host RNA silencing (By similarity).</text>
</comment>
<comment type="subcellular location">
    <subcellularLocation>
        <location>Virion</location>
    </subcellularLocation>
    <subcellularLocation>
        <location evidence="10 12">Host cytoplasm</location>
    </subcellularLocation>
    <text evidence="12">Present in viral inclusion bodies due to its interaction with NP.</text>
</comment>
<comment type="PTM">
    <text evidence="3 12">Phosphorylated by host (PubMed:12052831, PubMed:28915404). Phosphorylation negatively regulates the transcription activation (PubMed:12052831). Phosphorylation and dephosphorylation take place in viral inclusion bodies and are largely influenced by the presence of NP (PubMed:28915404). Dephosphorylated by host PPP2R5C; this dephosphorylation enhances viral transcription and is mediated by NP.</text>
</comment>
<comment type="similarity">
    <text evidence="16">Belongs to the filoviridae transcriptional activator VP30 family.</text>
</comment>
<gene>
    <name type="primary">VP30</name>
</gene>
<feature type="chain" id="PRO_0000222158" description="Transcriptional activator VP30">
    <location>
        <begin position="1"/>
        <end position="288"/>
    </location>
</feature>
<feature type="zinc finger region" description="C3H1-type; atypical">
    <location>
        <begin position="72"/>
        <end position="90"/>
    </location>
</feature>
<feature type="region of interest" description="Disordered" evidence="17">
    <location>
        <begin position="1"/>
        <end position="44"/>
    </location>
</feature>
<feature type="region of interest" description="RNA-binding" evidence="9">
    <location>
        <begin position="26"/>
        <end position="40"/>
    </location>
</feature>
<feature type="region of interest" description="Oligomerization" evidence="6">
    <location>
        <begin position="100"/>
        <end position="104"/>
    </location>
</feature>
<feature type="region of interest" description="Disordered" evidence="17">
    <location>
        <begin position="121"/>
        <end position="140"/>
    </location>
</feature>
<feature type="region of interest" description="Interaction with the nucleoprotein" evidence="11">
    <location>
        <begin position="202"/>
        <end position="237"/>
    </location>
</feature>
<feature type="region of interest" description="Disordered" evidence="17">
    <location>
        <begin position="268"/>
        <end position="288"/>
    </location>
</feature>
<feature type="compositionally biased region" description="Basic and acidic residues" evidence="2">
    <location>
        <begin position="30"/>
        <end position="41"/>
    </location>
</feature>
<feature type="modified residue" description="Phosphoserine; by host" evidence="12">
    <location>
        <position position="29"/>
    </location>
</feature>
<feature type="mutagenesis site" description="More than 70% loss of RNA-binding." evidence="8">
    <original>C</original>
    <variation>S</variation>
    <location>
        <position position="72"/>
    </location>
</feature>
<feature type="mutagenesis site" description="Complete loss of homo-oligomerization." evidence="6">
    <original>L</original>
    <variation>A</variation>
    <location>
        <position position="100"/>
    </location>
</feature>
<feature type="mutagenesis site" description="Complete loss of homooligomerization." evidence="6">
    <original>L</original>
    <variation>A</variation>
    <location>
        <position position="102"/>
    </location>
</feature>
<feature type="mutagenesis site" description="Complete loss of interaction with nucleoprotein/NP." evidence="10">
    <original>E</original>
    <variation>R</variation>
    <location>
        <position position="197"/>
    </location>
</feature>
<feature type="mutagenesis site" description="Complete loss of interaction with nucleoprotein/NP." evidence="10">
    <original>D</original>
    <variation>R</variation>
    <location>
        <position position="202"/>
    </location>
</feature>
<feature type="mutagenesis site" description="Complete loss of interaction with nucleoprotein/NP." evidence="10">
    <original>Q</original>
    <variation>R</variation>
    <location>
        <position position="203"/>
    </location>
</feature>
<feature type="mutagenesis site" description="Complete loss of interaction with nucleoprotein/NP." evidence="10">
    <original>Q</original>
    <variation>R</variation>
    <location>
        <position position="229"/>
    </location>
</feature>
<feature type="mutagenesis site" description="Complete loss of interaction with nucleoprotein/NP." evidence="10">
    <original>W</original>
    <variation>F</variation>
    <location>
        <position position="230"/>
    </location>
</feature>
<feature type="mutagenesis site" description="Complete loss of interaction with nucleoprotein/NP." evidence="10">
    <original>S</original>
    <variation>R</variation>
    <location>
        <position position="234"/>
    </location>
</feature>
<feature type="sequence conflict" description="In Ref. 1; AAB81005." evidence="16" ref="1">
    <original>VVVSGLRTLVPQSDNEEASTNPGTCSWSDEGTP</original>
    <variation>ALFQG</variation>
    <location>
        <begin position="256"/>
        <end position="288"/>
    </location>
</feature>
<feature type="helix" evidence="18">
    <location>
        <begin position="144"/>
        <end position="155"/>
    </location>
</feature>
<feature type="strand" evidence="19">
    <location>
        <begin position="160"/>
        <end position="162"/>
    </location>
</feature>
<feature type="helix" evidence="18">
    <location>
        <begin position="164"/>
        <end position="178"/>
    </location>
</feature>
<feature type="helix" evidence="18">
    <location>
        <begin position="183"/>
        <end position="185"/>
    </location>
</feature>
<feature type="helix" evidence="18">
    <location>
        <begin position="186"/>
        <end position="196"/>
    </location>
</feature>
<feature type="helix" evidence="18">
    <location>
        <begin position="201"/>
        <end position="203"/>
    </location>
</feature>
<feature type="helix" evidence="18">
    <location>
        <begin position="204"/>
        <end position="215"/>
    </location>
</feature>
<feature type="helix" evidence="18">
    <location>
        <begin position="221"/>
        <end position="229"/>
    </location>
</feature>
<feature type="helix" evidence="18">
    <location>
        <begin position="232"/>
        <end position="246"/>
    </location>
</feature>
<feature type="helix" evidence="18">
    <location>
        <begin position="254"/>
        <end position="257"/>
    </location>
</feature>
<feature type="turn" evidence="18">
    <location>
        <begin position="258"/>
        <end position="260"/>
    </location>
</feature>
<feature type="helix" evidence="18">
    <location>
        <begin position="261"/>
        <end position="264"/>
    </location>
</feature>
<keyword id="KW-0002">3D-structure</keyword>
<keyword id="KW-0010">Activator</keyword>
<keyword id="KW-1035">Host cytoplasm</keyword>
<keyword id="KW-0945">Host-virus interaction</keyword>
<keyword id="KW-1090">Inhibition of host innate immune response by virus</keyword>
<keyword id="KW-0479">Metal-binding</keyword>
<keyword id="KW-0597">Phosphoprotein</keyword>
<keyword id="KW-1185">Reference proteome</keyword>
<keyword id="KW-0694">RNA-binding</keyword>
<keyword id="KW-0941">Suppressor of RNA silencing</keyword>
<keyword id="KW-0804">Transcription</keyword>
<keyword id="KW-0899">Viral immunoevasion</keyword>
<keyword id="KW-0543">Viral nucleoprotein</keyword>
<keyword id="KW-0946">Virion</keyword>
<keyword id="KW-0862">Zinc</keyword>
<keyword id="KW-0863">Zinc-finger</keyword>
<organismHost>
    <name type="scientific">Epomops franqueti</name>
    <name type="common">Franquet's epauletted fruit bat</name>
    <name type="synonym">Epomophorus franqueti</name>
    <dbReference type="NCBI Taxonomy" id="77231"/>
</organismHost>
<organismHost>
    <name type="scientific">Homo sapiens</name>
    <name type="common">Human</name>
    <dbReference type="NCBI Taxonomy" id="9606"/>
</organismHost>
<organismHost>
    <name type="scientific">Myonycteris torquata</name>
    <name type="common">Little collared fruit bat</name>
    <dbReference type="NCBI Taxonomy" id="77243"/>
</organismHost>
<proteinExistence type="evidence at protein level"/>
<accession>Q05323</accession>
<accession>Q9YMG1</accession>
<dbReference type="EMBL" id="L11365">
    <property type="protein sequence ID" value="AAB81005.1"/>
    <property type="molecule type" value="Genomic_RNA"/>
</dbReference>
<dbReference type="EMBL" id="AF086833">
    <property type="protein sequence ID" value="AAD14587.1"/>
    <property type="molecule type" value="Genomic_RNA"/>
</dbReference>
<dbReference type="EMBL" id="AF499101">
    <property type="protein sequence ID" value="AAM76036.1"/>
    <property type="molecule type" value="Genomic_RNA"/>
</dbReference>
<dbReference type="EMBL" id="AY142960">
    <property type="protein sequence ID" value="AAN37509.1"/>
    <property type="molecule type" value="Genomic_RNA"/>
</dbReference>
<dbReference type="EMBL" id="AF272001">
    <property type="protein sequence ID" value="AAG40169.1"/>
    <property type="molecule type" value="Genomic_RNA"/>
</dbReference>
<dbReference type="RefSeq" id="NP_066249.1">
    <property type="nucleotide sequence ID" value="NC_002549.1"/>
</dbReference>
<dbReference type="PDB" id="5DVW">
    <property type="method" value="X-ray"/>
    <property type="resolution" value="1.75 A"/>
    <property type="chains" value="A/B/C/D=142-272"/>
</dbReference>
<dbReference type="PDB" id="5T3T">
    <property type="method" value="X-ray"/>
    <property type="resolution" value="2.20 A"/>
    <property type="chains" value="A/B/C/D/E/F/G/H/I/J=139-288"/>
</dbReference>
<dbReference type="PDBsum" id="5DVW"/>
<dbReference type="PDBsum" id="5T3T"/>
<dbReference type="SMR" id="Q05323"/>
<dbReference type="iPTMnet" id="Q05323"/>
<dbReference type="DNASU" id="911826"/>
<dbReference type="GeneID" id="911826"/>
<dbReference type="KEGG" id="vg:911826"/>
<dbReference type="EvolutionaryTrace" id="Q05323"/>
<dbReference type="Proteomes" id="UP000007209">
    <property type="component" value="Genome"/>
</dbReference>
<dbReference type="Proteomes" id="UP000109874">
    <property type="component" value="Genome"/>
</dbReference>
<dbReference type="Proteomes" id="UP000149419">
    <property type="component" value="Genome"/>
</dbReference>
<dbReference type="Proteomes" id="UP000150973">
    <property type="component" value="Genome"/>
</dbReference>
<dbReference type="Proteomes" id="UP000180447">
    <property type="component" value="Genome"/>
</dbReference>
<dbReference type="GO" id="GO:0030430">
    <property type="term" value="C:host cell cytoplasm"/>
    <property type="evidence" value="ECO:0007669"/>
    <property type="project" value="UniProtKB-SubCell"/>
</dbReference>
<dbReference type="GO" id="GO:1990904">
    <property type="term" value="C:ribonucleoprotein complex"/>
    <property type="evidence" value="ECO:0000315"/>
    <property type="project" value="CAFA"/>
</dbReference>
<dbReference type="GO" id="GO:0019013">
    <property type="term" value="C:viral nucleocapsid"/>
    <property type="evidence" value="ECO:0007669"/>
    <property type="project" value="UniProtKB-KW"/>
</dbReference>
<dbReference type="GO" id="GO:0042802">
    <property type="term" value="F:identical protein binding"/>
    <property type="evidence" value="ECO:0000353"/>
    <property type="project" value="CAFA"/>
</dbReference>
<dbReference type="GO" id="GO:0003727">
    <property type="term" value="F:single-stranded RNA binding"/>
    <property type="evidence" value="ECO:0000315"/>
    <property type="project" value="CAFA"/>
</dbReference>
<dbReference type="GO" id="GO:0008270">
    <property type="term" value="F:zinc ion binding"/>
    <property type="evidence" value="ECO:0000314"/>
    <property type="project" value="CAFA"/>
</dbReference>
<dbReference type="GO" id="GO:0050434">
    <property type="term" value="P:positive regulation of viral transcription"/>
    <property type="evidence" value="ECO:0000314"/>
    <property type="project" value="CACAO"/>
</dbReference>
<dbReference type="GO" id="GO:0044414">
    <property type="term" value="P:symbiont-mediated suppression of host defenses"/>
    <property type="evidence" value="ECO:0000315"/>
    <property type="project" value="CACAO"/>
</dbReference>
<dbReference type="GO" id="GO:0140533">
    <property type="term" value="P:symbiont-mediated suppression of host RNAi-mediated antiviral immune response"/>
    <property type="evidence" value="ECO:0000315"/>
    <property type="project" value="GO_Central"/>
</dbReference>
<dbReference type="FunFam" id="1.20.120.1160:FF:000002">
    <property type="entry name" value="Minor nucleoprotein VP30"/>
    <property type="match status" value="1"/>
</dbReference>
<dbReference type="Gene3D" id="1.20.120.1160">
    <property type="match status" value="1"/>
</dbReference>
<dbReference type="InterPro" id="IPR014459">
    <property type="entry name" value="VP30_FiloV"/>
</dbReference>
<dbReference type="Pfam" id="PF11507">
    <property type="entry name" value="Transcript_VP30"/>
    <property type="match status" value="1"/>
</dbReference>
<dbReference type="PIRSF" id="PIRSF011356">
    <property type="entry name" value="VP30_FiloV"/>
    <property type="match status" value="1"/>
</dbReference>
<name>VP30_EBOZM</name>